<name>RL16_HELHP</name>
<organism>
    <name type="scientific">Helicobacter hepaticus (strain ATCC 51449 / 3B1)</name>
    <dbReference type="NCBI Taxonomy" id="235279"/>
    <lineage>
        <taxon>Bacteria</taxon>
        <taxon>Pseudomonadati</taxon>
        <taxon>Campylobacterota</taxon>
        <taxon>Epsilonproteobacteria</taxon>
        <taxon>Campylobacterales</taxon>
        <taxon>Helicobacteraceae</taxon>
        <taxon>Helicobacter</taxon>
    </lineage>
</organism>
<keyword id="KW-1185">Reference proteome</keyword>
<keyword id="KW-0687">Ribonucleoprotein</keyword>
<keyword id="KW-0689">Ribosomal protein</keyword>
<keyword id="KW-0694">RNA-binding</keyword>
<keyword id="KW-0699">rRNA-binding</keyword>
<keyword id="KW-0820">tRNA-binding</keyword>
<comment type="function">
    <text evidence="1">Binds 23S rRNA and is also seen to make contacts with the A and possibly P site tRNAs.</text>
</comment>
<comment type="subunit">
    <text evidence="1">Part of the 50S ribosomal subunit.</text>
</comment>
<comment type="similarity">
    <text evidence="1">Belongs to the universal ribosomal protein uL16 family.</text>
</comment>
<dbReference type="EMBL" id="AE017125">
    <property type="protein sequence ID" value="AAP77982.1"/>
    <property type="molecule type" value="Genomic_DNA"/>
</dbReference>
<dbReference type="RefSeq" id="WP_011116225.1">
    <property type="nucleotide sequence ID" value="NC_004917.1"/>
</dbReference>
<dbReference type="SMR" id="Q7VGD7"/>
<dbReference type="STRING" id="235279.HH_1385"/>
<dbReference type="KEGG" id="hhe:HH_1385"/>
<dbReference type="eggNOG" id="COG0197">
    <property type="taxonomic scope" value="Bacteria"/>
</dbReference>
<dbReference type="HOGENOM" id="CLU_078858_2_1_7"/>
<dbReference type="OrthoDB" id="9802589at2"/>
<dbReference type="Proteomes" id="UP000002495">
    <property type="component" value="Chromosome"/>
</dbReference>
<dbReference type="GO" id="GO:0022625">
    <property type="term" value="C:cytosolic large ribosomal subunit"/>
    <property type="evidence" value="ECO:0007669"/>
    <property type="project" value="TreeGrafter"/>
</dbReference>
<dbReference type="GO" id="GO:0019843">
    <property type="term" value="F:rRNA binding"/>
    <property type="evidence" value="ECO:0007669"/>
    <property type="project" value="UniProtKB-UniRule"/>
</dbReference>
<dbReference type="GO" id="GO:0003735">
    <property type="term" value="F:structural constituent of ribosome"/>
    <property type="evidence" value="ECO:0007669"/>
    <property type="project" value="InterPro"/>
</dbReference>
<dbReference type="GO" id="GO:0000049">
    <property type="term" value="F:tRNA binding"/>
    <property type="evidence" value="ECO:0007669"/>
    <property type="project" value="UniProtKB-KW"/>
</dbReference>
<dbReference type="GO" id="GO:0006412">
    <property type="term" value="P:translation"/>
    <property type="evidence" value="ECO:0007669"/>
    <property type="project" value="UniProtKB-UniRule"/>
</dbReference>
<dbReference type="CDD" id="cd01433">
    <property type="entry name" value="Ribosomal_L16_L10e"/>
    <property type="match status" value="1"/>
</dbReference>
<dbReference type="FunFam" id="3.90.1170.10:FF:000001">
    <property type="entry name" value="50S ribosomal protein L16"/>
    <property type="match status" value="1"/>
</dbReference>
<dbReference type="Gene3D" id="3.90.1170.10">
    <property type="entry name" value="Ribosomal protein L10e/L16"/>
    <property type="match status" value="1"/>
</dbReference>
<dbReference type="HAMAP" id="MF_01342">
    <property type="entry name" value="Ribosomal_uL16"/>
    <property type="match status" value="1"/>
</dbReference>
<dbReference type="InterPro" id="IPR047873">
    <property type="entry name" value="Ribosomal_uL16"/>
</dbReference>
<dbReference type="InterPro" id="IPR000114">
    <property type="entry name" value="Ribosomal_uL16_bact-type"/>
</dbReference>
<dbReference type="InterPro" id="IPR020798">
    <property type="entry name" value="Ribosomal_uL16_CS"/>
</dbReference>
<dbReference type="InterPro" id="IPR016180">
    <property type="entry name" value="Ribosomal_uL16_dom"/>
</dbReference>
<dbReference type="InterPro" id="IPR036920">
    <property type="entry name" value="Ribosomal_uL16_sf"/>
</dbReference>
<dbReference type="NCBIfam" id="TIGR01164">
    <property type="entry name" value="rplP_bact"/>
    <property type="match status" value="1"/>
</dbReference>
<dbReference type="PANTHER" id="PTHR12220">
    <property type="entry name" value="50S/60S RIBOSOMAL PROTEIN L16"/>
    <property type="match status" value="1"/>
</dbReference>
<dbReference type="PANTHER" id="PTHR12220:SF13">
    <property type="entry name" value="LARGE RIBOSOMAL SUBUNIT PROTEIN UL16M"/>
    <property type="match status" value="1"/>
</dbReference>
<dbReference type="Pfam" id="PF00252">
    <property type="entry name" value="Ribosomal_L16"/>
    <property type="match status" value="1"/>
</dbReference>
<dbReference type="PRINTS" id="PR00060">
    <property type="entry name" value="RIBOSOMALL16"/>
</dbReference>
<dbReference type="SUPFAM" id="SSF54686">
    <property type="entry name" value="Ribosomal protein L16p/L10e"/>
    <property type="match status" value="1"/>
</dbReference>
<dbReference type="PROSITE" id="PS00586">
    <property type="entry name" value="RIBOSOMAL_L16_1"/>
    <property type="match status" value="1"/>
</dbReference>
<dbReference type="PROSITE" id="PS00701">
    <property type="entry name" value="RIBOSOMAL_L16_2"/>
    <property type="match status" value="1"/>
</dbReference>
<gene>
    <name evidence="1" type="primary">rplP</name>
    <name type="ordered locus">HH_1385</name>
</gene>
<reference key="1">
    <citation type="journal article" date="2003" name="Proc. Natl. Acad. Sci. U.S.A.">
        <title>The complete genome sequence of the carcinogenic bacterium Helicobacter hepaticus.</title>
        <authorList>
            <person name="Suerbaum S."/>
            <person name="Josenhans C."/>
            <person name="Sterzenbach T."/>
            <person name="Drescher B."/>
            <person name="Brandt P."/>
            <person name="Bell M."/>
            <person name="Droege M."/>
            <person name="Fartmann B."/>
            <person name="Fischer H.-P."/>
            <person name="Ge Z."/>
            <person name="Hoerster A."/>
            <person name="Holland R."/>
            <person name="Klein K."/>
            <person name="Koenig J."/>
            <person name="Macko L."/>
            <person name="Mendz G.L."/>
            <person name="Nyakatura G."/>
            <person name="Schauer D.B."/>
            <person name="Shen Z."/>
            <person name="Weber J."/>
            <person name="Frosch M."/>
            <person name="Fox J.G."/>
        </authorList>
    </citation>
    <scope>NUCLEOTIDE SEQUENCE [LARGE SCALE GENOMIC DNA]</scope>
    <source>
        <strain>ATCC 51449 / 3B1</strain>
    </source>
</reference>
<protein>
    <recommendedName>
        <fullName evidence="1">Large ribosomal subunit protein uL16</fullName>
    </recommendedName>
    <alternativeName>
        <fullName evidence="3">50S ribosomal protein L16</fullName>
    </alternativeName>
</protein>
<sequence length="141" mass="15996">MLMPKRTKYRKQMKGRNRGKSFRGANLAFGDIGIKAIEHGRIDSRQIESARIAMTRHIKRAGKVWIRVFPDKPLTAKPLETRMGKGKGGVEKWVMNIKPGRLIYEMAGIDEALAREALALAQSKLPFKTKIITSESENEIY</sequence>
<proteinExistence type="inferred from homology"/>
<feature type="chain" id="PRO_0000062114" description="Large ribosomal subunit protein uL16">
    <location>
        <begin position="1"/>
        <end position="141"/>
    </location>
</feature>
<feature type="region of interest" description="Disordered" evidence="2">
    <location>
        <begin position="1"/>
        <end position="20"/>
    </location>
</feature>
<evidence type="ECO:0000255" key="1">
    <source>
        <dbReference type="HAMAP-Rule" id="MF_01342"/>
    </source>
</evidence>
<evidence type="ECO:0000256" key="2">
    <source>
        <dbReference type="SAM" id="MobiDB-lite"/>
    </source>
</evidence>
<evidence type="ECO:0000305" key="3"/>
<accession>Q7VGD7</accession>